<name>MECA2_BACAN</name>
<feature type="chain" id="PRO_0000212261" description="Adapter protein MecA 2">
    <location>
        <begin position="1"/>
        <end position="202"/>
    </location>
</feature>
<organism>
    <name type="scientific">Bacillus anthracis</name>
    <dbReference type="NCBI Taxonomy" id="1392"/>
    <lineage>
        <taxon>Bacteria</taxon>
        <taxon>Bacillati</taxon>
        <taxon>Bacillota</taxon>
        <taxon>Bacilli</taxon>
        <taxon>Bacillales</taxon>
        <taxon>Bacillaceae</taxon>
        <taxon>Bacillus</taxon>
        <taxon>Bacillus cereus group</taxon>
    </lineage>
</organism>
<gene>
    <name type="primary">mecA2</name>
    <name type="ordered locus">BA_1510</name>
    <name type="ordered locus">GBAA_1510</name>
    <name type="ordered locus">BAS1400</name>
</gene>
<protein>
    <recommendedName>
        <fullName>Adapter protein MecA 2</fullName>
    </recommendedName>
</protein>
<proteinExistence type="inferred from homology"/>
<reference key="1">
    <citation type="journal article" date="2003" name="Nature">
        <title>The genome sequence of Bacillus anthracis Ames and comparison to closely related bacteria.</title>
        <authorList>
            <person name="Read T.D."/>
            <person name="Peterson S.N."/>
            <person name="Tourasse N.J."/>
            <person name="Baillie L.W."/>
            <person name="Paulsen I.T."/>
            <person name="Nelson K.E."/>
            <person name="Tettelin H."/>
            <person name="Fouts D.E."/>
            <person name="Eisen J.A."/>
            <person name="Gill S.R."/>
            <person name="Holtzapple E.K."/>
            <person name="Okstad O.A."/>
            <person name="Helgason E."/>
            <person name="Rilstone J."/>
            <person name="Wu M."/>
            <person name="Kolonay J.F."/>
            <person name="Beanan M.J."/>
            <person name="Dodson R.J."/>
            <person name="Brinkac L.M."/>
            <person name="Gwinn M.L."/>
            <person name="DeBoy R.T."/>
            <person name="Madpu R."/>
            <person name="Daugherty S.C."/>
            <person name="Durkin A.S."/>
            <person name="Haft D.H."/>
            <person name="Nelson W.C."/>
            <person name="Peterson J.D."/>
            <person name="Pop M."/>
            <person name="Khouri H.M."/>
            <person name="Radune D."/>
            <person name="Benton J.L."/>
            <person name="Mahamoud Y."/>
            <person name="Jiang L."/>
            <person name="Hance I.R."/>
            <person name="Weidman J.F."/>
            <person name="Berry K.J."/>
            <person name="Plaut R.D."/>
            <person name="Wolf A.M."/>
            <person name="Watkins K.L."/>
            <person name="Nierman W.C."/>
            <person name="Hazen A."/>
            <person name="Cline R.T."/>
            <person name="Redmond C."/>
            <person name="Thwaite J.E."/>
            <person name="White O."/>
            <person name="Salzberg S.L."/>
            <person name="Thomason B."/>
            <person name="Friedlander A.M."/>
            <person name="Koehler T.M."/>
            <person name="Hanna P.C."/>
            <person name="Kolstoe A.-B."/>
            <person name="Fraser C.M."/>
        </authorList>
    </citation>
    <scope>NUCLEOTIDE SEQUENCE [LARGE SCALE GENOMIC DNA]</scope>
    <source>
        <strain>Ames / isolate Porton</strain>
    </source>
</reference>
<reference key="2">
    <citation type="journal article" date="2009" name="J. Bacteriol.">
        <title>The complete genome sequence of Bacillus anthracis Ames 'Ancestor'.</title>
        <authorList>
            <person name="Ravel J."/>
            <person name="Jiang L."/>
            <person name="Stanley S.T."/>
            <person name="Wilson M.R."/>
            <person name="Decker R.S."/>
            <person name="Read T.D."/>
            <person name="Worsham P."/>
            <person name="Keim P.S."/>
            <person name="Salzberg S.L."/>
            <person name="Fraser-Liggett C.M."/>
            <person name="Rasko D.A."/>
        </authorList>
    </citation>
    <scope>NUCLEOTIDE SEQUENCE [LARGE SCALE GENOMIC DNA]</scope>
    <source>
        <strain>Ames ancestor</strain>
    </source>
</reference>
<reference key="3">
    <citation type="submission" date="2004-01" db="EMBL/GenBank/DDBJ databases">
        <title>Complete genome sequence of Bacillus anthracis Sterne.</title>
        <authorList>
            <person name="Brettin T.S."/>
            <person name="Bruce D."/>
            <person name="Challacombe J.F."/>
            <person name="Gilna P."/>
            <person name="Han C."/>
            <person name="Hill K."/>
            <person name="Hitchcock P."/>
            <person name="Jackson P."/>
            <person name="Keim P."/>
            <person name="Longmire J."/>
            <person name="Lucas S."/>
            <person name="Okinaka R."/>
            <person name="Richardson P."/>
            <person name="Rubin E."/>
            <person name="Tice H."/>
        </authorList>
    </citation>
    <scope>NUCLEOTIDE SEQUENCE [LARGE SCALE GENOMIC DNA]</scope>
    <source>
        <strain>Sterne</strain>
    </source>
</reference>
<keyword id="KW-0178">Competence</keyword>
<keyword id="KW-1185">Reference proteome</keyword>
<keyword id="KW-0749">Sporulation</keyword>
<dbReference type="EMBL" id="AE016879">
    <property type="protein sequence ID" value="AAP25447.1"/>
    <property type="molecule type" value="Genomic_DNA"/>
</dbReference>
<dbReference type="EMBL" id="AE017334">
    <property type="protein sequence ID" value="AAT30609.1"/>
    <property type="molecule type" value="Genomic_DNA"/>
</dbReference>
<dbReference type="EMBL" id="AE017225">
    <property type="protein sequence ID" value="AAT53720.1"/>
    <property type="molecule type" value="Genomic_DNA"/>
</dbReference>
<dbReference type="RefSeq" id="NP_843961.1">
    <property type="nucleotide sequence ID" value="NC_003997.3"/>
</dbReference>
<dbReference type="RefSeq" id="WP_001235392.1">
    <property type="nucleotide sequence ID" value="NZ_WXXJ01000014.1"/>
</dbReference>
<dbReference type="RefSeq" id="YP_027669.1">
    <property type="nucleotide sequence ID" value="NC_005945.1"/>
</dbReference>
<dbReference type="SMR" id="Q81SY4"/>
<dbReference type="STRING" id="261594.GBAA_1510"/>
<dbReference type="DNASU" id="1086207"/>
<dbReference type="KEGG" id="ban:BA_1510"/>
<dbReference type="KEGG" id="bar:GBAA_1510"/>
<dbReference type="KEGG" id="bat:BAS1400"/>
<dbReference type="PATRIC" id="fig|198094.11.peg.1483"/>
<dbReference type="eggNOG" id="COG4862">
    <property type="taxonomic scope" value="Bacteria"/>
</dbReference>
<dbReference type="HOGENOM" id="CLU_071496_3_0_9"/>
<dbReference type="OMA" id="YIEMQVK"/>
<dbReference type="OrthoDB" id="2085234at2"/>
<dbReference type="Proteomes" id="UP000000427">
    <property type="component" value="Chromosome"/>
</dbReference>
<dbReference type="Proteomes" id="UP000000594">
    <property type="component" value="Chromosome"/>
</dbReference>
<dbReference type="GO" id="GO:0030674">
    <property type="term" value="F:protein-macromolecule adaptor activity"/>
    <property type="evidence" value="ECO:0007669"/>
    <property type="project" value="UniProtKB-UniRule"/>
</dbReference>
<dbReference type="GO" id="GO:0030420">
    <property type="term" value="P:establishment of competence for transformation"/>
    <property type="evidence" value="ECO:0007669"/>
    <property type="project" value="UniProtKB-KW"/>
</dbReference>
<dbReference type="GO" id="GO:0045808">
    <property type="term" value="P:negative regulation of establishment of competence for transformation"/>
    <property type="evidence" value="ECO:0007669"/>
    <property type="project" value="UniProtKB-UniRule"/>
</dbReference>
<dbReference type="GO" id="GO:0042174">
    <property type="term" value="P:negative regulation of sporulation resulting in formation of a cellular spore"/>
    <property type="evidence" value="ECO:0007669"/>
    <property type="project" value="UniProtKB-UniRule"/>
</dbReference>
<dbReference type="GO" id="GO:0030435">
    <property type="term" value="P:sporulation resulting in formation of a cellular spore"/>
    <property type="evidence" value="ECO:0007669"/>
    <property type="project" value="UniProtKB-KW"/>
</dbReference>
<dbReference type="FunFam" id="3.30.70.1950:FF:000001">
    <property type="entry name" value="Adapter protein MecA"/>
    <property type="match status" value="1"/>
</dbReference>
<dbReference type="Gene3D" id="3.30.70.1950">
    <property type="match status" value="1"/>
</dbReference>
<dbReference type="HAMAP" id="MF_01124">
    <property type="entry name" value="MecA"/>
    <property type="match status" value="1"/>
</dbReference>
<dbReference type="InterPro" id="IPR038471">
    <property type="entry name" value="MecA_C_sf"/>
</dbReference>
<dbReference type="InterPro" id="IPR008681">
    <property type="entry name" value="Neg-reg_MecA"/>
</dbReference>
<dbReference type="NCBIfam" id="NF002781">
    <property type="entry name" value="PRK02899.1"/>
    <property type="match status" value="1"/>
</dbReference>
<dbReference type="PANTHER" id="PTHR39161">
    <property type="entry name" value="ADAPTER PROTEIN MECA"/>
    <property type="match status" value="1"/>
</dbReference>
<dbReference type="PANTHER" id="PTHR39161:SF2">
    <property type="entry name" value="ADAPTER PROTEIN MECA 2"/>
    <property type="match status" value="1"/>
</dbReference>
<dbReference type="Pfam" id="PF05389">
    <property type="entry name" value="MecA"/>
    <property type="match status" value="2"/>
</dbReference>
<dbReference type="PIRSF" id="PIRSF029008">
    <property type="entry name" value="MecA"/>
    <property type="match status" value="1"/>
</dbReference>
<comment type="function">
    <text evidence="1">Enables the recognition and targeting of unfolded and aggregated proteins to the ClpC protease or to other proteins involved in proteolysis. Acts negatively in the development of competence by binding ComK and recruiting it to the ClpCP protease. When overexpressed, inhibits sporulation. Also involved in Spx degradation by ClpC (By similarity).</text>
</comment>
<comment type="subunit">
    <text evidence="1">Homodimer.</text>
</comment>
<comment type="domain">
    <text>The N-terminal domain has binding sites for ComK and probably for unfolded/aggregated proteins; the C-terminal domain interacts with ClpC.</text>
</comment>
<comment type="similarity">
    <text evidence="2">Belongs to the MecA family.</text>
</comment>
<accession>Q81SY4</accession>
<accession>Q6I162</accession>
<accession>Q6KV16</accession>
<evidence type="ECO:0000250" key="1"/>
<evidence type="ECO:0000305" key="2"/>
<sequence length="202" mass="23730">MRLERLNYNKIKIFLTFDDLSERGLTKEDLWRNAPKVQQLFRDMMQEANKELGFEADGPIAVEVFSLQAQGMVVIVTKEHQEADTDDEFRDEFIEMQVTLDESEHILYEFATLDDVINLSNRLYNLDVTGGKLYTWDGRFYLWMEEEEQIQLLKADFIAILAEYGNPSTATIYRLMEYGKELMASQAIEQIHNYFVKKQNLS</sequence>